<protein>
    <recommendedName>
        <fullName evidence="2">Ribosome-binding ATPase YchF</fullName>
    </recommendedName>
</protein>
<sequence>MLSAGIVGLPNVGKSTLFSAITNLQVEIANYPFATIEPNAGIVNVIDERLDKLASLIKPDKVTHTTFRFVDIAGLVKGASKGEGLGNQFLANIREVDLICHVVRCYEDKKIVHVNNQVDPVFDFEIIVNELIQADIEVVNTRIGKIKRKAESGDKQSKEEYQLLAPVLQGLQQNQMVLHLVNEVDLKKLKSLNLLTAKPILVVANVSEADLSNLDHNPHLTQLNQFLKQHNLPHAIPVCALLENELSSLDANGRQDWLKELGLSDYQGLNQLIKTAYDAIGLWSFFTFGKQEVRAWAFKKGWLAPQCAGEIHTDFERGFIKVEVISWNQLYELKSLQEAKKQGLVRLRGQGLRDARWWCVSL</sequence>
<dbReference type="EMBL" id="U00089">
    <property type="protein sequence ID" value="AAB95776.1"/>
    <property type="molecule type" value="Genomic_DNA"/>
</dbReference>
<dbReference type="PIR" id="S73454">
    <property type="entry name" value="S73454"/>
</dbReference>
<dbReference type="RefSeq" id="NP_109714.1">
    <property type="nucleotide sequence ID" value="NC_000912.1"/>
</dbReference>
<dbReference type="SMR" id="P75088"/>
<dbReference type="STRING" id="272634.MPN_026"/>
<dbReference type="EnsemblBacteria" id="AAB95776">
    <property type="protein sequence ID" value="AAB95776"/>
    <property type="gene ID" value="MPN_026"/>
</dbReference>
<dbReference type="KEGG" id="mpn:MPN_026"/>
<dbReference type="PATRIC" id="fig|272634.6.peg.25"/>
<dbReference type="HOGENOM" id="CLU_018395_0_1_14"/>
<dbReference type="OrthoDB" id="9807318at2"/>
<dbReference type="BioCyc" id="MPNE272634:G1GJ3-39-MONOMER"/>
<dbReference type="Proteomes" id="UP000000808">
    <property type="component" value="Chromosome"/>
</dbReference>
<dbReference type="GO" id="GO:0005737">
    <property type="term" value="C:cytoplasm"/>
    <property type="evidence" value="ECO:0007669"/>
    <property type="project" value="TreeGrafter"/>
</dbReference>
<dbReference type="GO" id="GO:0005524">
    <property type="term" value="F:ATP binding"/>
    <property type="evidence" value="ECO:0007669"/>
    <property type="project" value="UniProtKB-UniRule"/>
</dbReference>
<dbReference type="GO" id="GO:0016887">
    <property type="term" value="F:ATP hydrolysis activity"/>
    <property type="evidence" value="ECO:0007669"/>
    <property type="project" value="UniProtKB-UniRule"/>
</dbReference>
<dbReference type="GO" id="GO:0005525">
    <property type="term" value="F:GTP binding"/>
    <property type="evidence" value="ECO:0007669"/>
    <property type="project" value="InterPro"/>
</dbReference>
<dbReference type="GO" id="GO:0046872">
    <property type="term" value="F:metal ion binding"/>
    <property type="evidence" value="ECO:0007669"/>
    <property type="project" value="UniProtKB-KW"/>
</dbReference>
<dbReference type="GO" id="GO:0043023">
    <property type="term" value="F:ribosomal large subunit binding"/>
    <property type="evidence" value="ECO:0007669"/>
    <property type="project" value="UniProtKB-UniRule"/>
</dbReference>
<dbReference type="CDD" id="cd01900">
    <property type="entry name" value="YchF"/>
    <property type="match status" value="1"/>
</dbReference>
<dbReference type="FunFam" id="3.10.20.30:FF:000029">
    <property type="entry name" value="Obg-like ATPase 1"/>
    <property type="match status" value="1"/>
</dbReference>
<dbReference type="FunFam" id="1.10.150.300:FF:000001">
    <property type="entry name" value="Ribosome-binding ATPase YchF"/>
    <property type="match status" value="1"/>
</dbReference>
<dbReference type="Gene3D" id="3.10.20.30">
    <property type="match status" value="1"/>
</dbReference>
<dbReference type="Gene3D" id="3.40.50.300">
    <property type="entry name" value="P-loop containing nucleotide triphosphate hydrolases"/>
    <property type="match status" value="1"/>
</dbReference>
<dbReference type="Gene3D" id="1.10.150.300">
    <property type="entry name" value="TGS-like domain"/>
    <property type="match status" value="1"/>
</dbReference>
<dbReference type="HAMAP" id="MF_00944">
    <property type="entry name" value="YchF_OLA1_ATPase"/>
    <property type="match status" value="1"/>
</dbReference>
<dbReference type="InterPro" id="IPR004396">
    <property type="entry name" value="ATPase_YchF/OLA1"/>
</dbReference>
<dbReference type="InterPro" id="IPR012675">
    <property type="entry name" value="Beta-grasp_dom_sf"/>
</dbReference>
<dbReference type="InterPro" id="IPR031167">
    <property type="entry name" value="G_OBG"/>
</dbReference>
<dbReference type="InterPro" id="IPR006073">
    <property type="entry name" value="GTP-bd"/>
</dbReference>
<dbReference type="InterPro" id="IPR027417">
    <property type="entry name" value="P-loop_NTPase"/>
</dbReference>
<dbReference type="InterPro" id="IPR004095">
    <property type="entry name" value="TGS"/>
</dbReference>
<dbReference type="InterPro" id="IPR012676">
    <property type="entry name" value="TGS-like"/>
</dbReference>
<dbReference type="InterPro" id="IPR023192">
    <property type="entry name" value="TGS-like_dom_sf"/>
</dbReference>
<dbReference type="InterPro" id="IPR013029">
    <property type="entry name" value="YchF_C"/>
</dbReference>
<dbReference type="InterPro" id="IPR041706">
    <property type="entry name" value="YchF_N"/>
</dbReference>
<dbReference type="NCBIfam" id="TIGR00092">
    <property type="entry name" value="redox-regulated ATPase YchF"/>
    <property type="match status" value="1"/>
</dbReference>
<dbReference type="PANTHER" id="PTHR23305">
    <property type="entry name" value="OBG GTPASE FAMILY"/>
    <property type="match status" value="1"/>
</dbReference>
<dbReference type="PANTHER" id="PTHR23305:SF18">
    <property type="entry name" value="OBG-TYPE G DOMAIN-CONTAINING PROTEIN"/>
    <property type="match status" value="1"/>
</dbReference>
<dbReference type="Pfam" id="PF01926">
    <property type="entry name" value="MMR_HSR1"/>
    <property type="match status" value="1"/>
</dbReference>
<dbReference type="Pfam" id="PF06071">
    <property type="entry name" value="YchF-GTPase_C"/>
    <property type="match status" value="1"/>
</dbReference>
<dbReference type="PIRSF" id="PIRSF006641">
    <property type="entry name" value="CHP00092"/>
    <property type="match status" value="1"/>
</dbReference>
<dbReference type="PRINTS" id="PR00326">
    <property type="entry name" value="GTP1OBG"/>
</dbReference>
<dbReference type="SUPFAM" id="SSF52540">
    <property type="entry name" value="P-loop containing nucleoside triphosphate hydrolases"/>
    <property type="match status" value="1"/>
</dbReference>
<dbReference type="SUPFAM" id="SSF81271">
    <property type="entry name" value="TGS-like"/>
    <property type="match status" value="1"/>
</dbReference>
<dbReference type="PROSITE" id="PS51710">
    <property type="entry name" value="G_OBG"/>
    <property type="match status" value="1"/>
</dbReference>
<dbReference type="PROSITE" id="PS51880">
    <property type="entry name" value="TGS"/>
    <property type="match status" value="1"/>
</dbReference>
<organism>
    <name type="scientific">Mycoplasma pneumoniae (strain ATCC 29342 / M129 / Subtype 1)</name>
    <name type="common">Mycoplasmoides pneumoniae</name>
    <dbReference type="NCBI Taxonomy" id="272634"/>
    <lineage>
        <taxon>Bacteria</taxon>
        <taxon>Bacillati</taxon>
        <taxon>Mycoplasmatota</taxon>
        <taxon>Mycoplasmoidales</taxon>
        <taxon>Mycoplasmoidaceae</taxon>
        <taxon>Mycoplasmoides</taxon>
    </lineage>
</organism>
<name>YCHF_MYCPN</name>
<gene>
    <name evidence="2" type="primary">ychF</name>
    <name type="ordered locus">MPN_026</name>
    <name type="ORF">B01_orf362</name>
    <name type="ORF">MP128</name>
</gene>
<feature type="chain" id="PRO_0000122459" description="Ribosome-binding ATPase YchF">
    <location>
        <begin position="1"/>
        <end position="362"/>
    </location>
</feature>
<feature type="domain" description="OBG-type G">
    <location>
        <begin position="2"/>
        <end position="258"/>
    </location>
</feature>
<feature type="domain" description="TGS" evidence="3">
    <location>
        <begin position="281"/>
        <end position="347"/>
    </location>
</feature>
<feature type="binding site" evidence="2">
    <location>
        <begin position="11"/>
        <end position="16"/>
    </location>
    <ligand>
        <name>ATP</name>
        <dbReference type="ChEBI" id="CHEBI:30616"/>
    </ligand>
</feature>
<feature type="binding site" evidence="1">
    <location>
        <position position="15"/>
    </location>
    <ligand>
        <name>Mg(2+)</name>
        <dbReference type="ChEBI" id="CHEBI:18420"/>
    </ligand>
</feature>
<feature type="binding site" evidence="1">
    <location>
        <position position="35"/>
    </location>
    <ligand>
        <name>Mg(2+)</name>
        <dbReference type="ChEBI" id="CHEBI:18420"/>
    </ligand>
</feature>
<keyword id="KW-0067">ATP-binding</keyword>
<keyword id="KW-0460">Magnesium</keyword>
<keyword id="KW-0479">Metal-binding</keyword>
<keyword id="KW-0547">Nucleotide-binding</keyword>
<keyword id="KW-1185">Reference proteome</keyword>
<evidence type="ECO:0000250" key="1"/>
<evidence type="ECO:0000255" key="2">
    <source>
        <dbReference type="HAMAP-Rule" id="MF_00944"/>
    </source>
</evidence>
<evidence type="ECO:0000255" key="3">
    <source>
        <dbReference type="PROSITE-ProRule" id="PRU01228"/>
    </source>
</evidence>
<proteinExistence type="inferred from homology"/>
<reference key="1">
    <citation type="journal article" date="1996" name="Nucleic Acids Res.">
        <title>Complete sequence analysis of the genome of the bacterium Mycoplasma pneumoniae.</title>
        <authorList>
            <person name="Himmelreich R."/>
            <person name="Hilbert H."/>
            <person name="Plagens H."/>
            <person name="Pirkl E."/>
            <person name="Li B.-C."/>
            <person name="Herrmann R."/>
        </authorList>
    </citation>
    <scope>NUCLEOTIDE SEQUENCE [LARGE SCALE GENOMIC DNA]</scope>
    <source>
        <strain>ATCC 29342 / M129 / Subtype 1</strain>
    </source>
</reference>
<comment type="function">
    <text evidence="2">ATPase that binds to both the 70S ribosome and the 50S ribosomal subunit in a nucleotide-independent manner.</text>
</comment>
<comment type="cofactor">
    <cofactor evidence="1">
        <name>Mg(2+)</name>
        <dbReference type="ChEBI" id="CHEBI:18420"/>
    </cofactor>
</comment>
<comment type="similarity">
    <text evidence="2">Belongs to the TRAFAC class OBG-HflX-like GTPase superfamily. OBG GTPase family. YchF/OLA1 subfamily.</text>
</comment>
<accession>P75088</accession>